<protein>
    <recommendedName>
        <fullName evidence="1">Large ribosomal subunit protein bL28c</fullName>
    </recommendedName>
    <alternativeName>
        <fullName>50S ribosomal protein L28, chloroplastic</fullName>
    </alternativeName>
</protein>
<name>RK28_PORPU</name>
<geneLocation type="chloroplast"/>
<reference key="1">
    <citation type="journal article" date="1995" name="Plant Mol. Biol. Rep.">
        <title>Complete nucleotide sequence of the Porphyra purpurea chloroplast genome.</title>
        <authorList>
            <person name="Reith M.E."/>
            <person name="Munholland J."/>
        </authorList>
    </citation>
    <scope>NUCLEOTIDE SEQUENCE [LARGE SCALE GENOMIC DNA]</scope>
    <source>
        <strain>Avonport</strain>
    </source>
</reference>
<feature type="chain" id="PRO_0000178604" description="Large ribosomal subunit protein bL28c">
    <location>
        <begin position="1"/>
        <end position="63"/>
    </location>
</feature>
<organism>
    <name type="scientific">Porphyra purpurea</name>
    <name type="common">Red seaweed</name>
    <name type="synonym">Ulva purpurea</name>
    <dbReference type="NCBI Taxonomy" id="2787"/>
    <lineage>
        <taxon>Eukaryota</taxon>
        <taxon>Rhodophyta</taxon>
        <taxon>Bangiophyceae</taxon>
        <taxon>Bangiales</taxon>
        <taxon>Bangiaceae</taxon>
        <taxon>Porphyra</taxon>
    </lineage>
</organism>
<sequence>MSKKCQLTGKVANNGYAVSHSHKRTKKLQNVNLQYKKVWSTEQNKWIKMLISTKAIKTLTKAL</sequence>
<gene>
    <name type="primary">rpl28</name>
</gene>
<accession>P51224</accession>
<comment type="subcellular location">
    <subcellularLocation>
        <location>Plastid</location>
        <location>Chloroplast</location>
    </subcellularLocation>
</comment>
<comment type="similarity">
    <text evidence="1">Belongs to the bacterial ribosomal protein bL28 family.</text>
</comment>
<keyword id="KW-0150">Chloroplast</keyword>
<keyword id="KW-0934">Plastid</keyword>
<keyword id="KW-0687">Ribonucleoprotein</keyword>
<keyword id="KW-0689">Ribosomal protein</keyword>
<dbReference type="EMBL" id="U38804">
    <property type="protein sequence ID" value="AAC08110.1"/>
    <property type="molecule type" value="Genomic_DNA"/>
</dbReference>
<dbReference type="PIR" id="S73145">
    <property type="entry name" value="S73145"/>
</dbReference>
<dbReference type="RefSeq" id="NP_053834.1">
    <property type="nucleotide sequence ID" value="NC_000925.1"/>
</dbReference>
<dbReference type="SMR" id="P51224"/>
<dbReference type="GeneID" id="809851"/>
<dbReference type="GO" id="GO:0009507">
    <property type="term" value="C:chloroplast"/>
    <property type="evidence" value="ECO:0007669"/>
    <property type="project" value="UniProtKB-SubCell"/>
</dbReference>
<dbReference type="GO" id="GO:1990904">
    <property type="term" value="C:ribonucleoprotein complex"/>
    <property type="evidence" value="ECO:0007669"/>
    <property type="project" value="UniProtKB-KW"/>
</dbReference>
<dbReference type="GO" id="GO:0005840">
    <property type="term" value="C:ribosome"/>
    <property type="evidence" value="ECO:0007669"/>
    <property type="project" value="UniProtKB-KW"/>
</dbReference>
<dbReference type="GO" id="GO:0003735">
    <property type="term" value="F:structural constituent of ribosome"/>
    <property type="evidence" value="ECO:0007669"/>
    <property type="project" value="InterPro"/>
</dbReference>
<dbReference type="GO" id="GO:0006412">
    <property type="term" value="P:translation"/>
    <property type="evidence" value="ECO:0007669"/>
    <property type="project" value="UniProtKB-UniRule"/>
</dbReference>
<dbReference type="Gene3D" id="2.30.170.40">
    <property type="entry name" value="Ribosomal protein L28/L24"/>
    <property type="match status" value="1"/>
</dbReference>
<dbReference type="HAMAP" id="MF_00373">
    <property type="entry name" value="Ribosomal_bL28"/>
    <property type="match status" value="1"/>
</dbReference>
<dbReference type="InterPro" id="IPR026569">
    <property type="entry name" value="Ribosomal_bL28"/>
</dbReference>
<dbReference type="InterPro" id="IPR034704">
    <property type="entry name" value="Ribosomal_bL28/bL31-like_sf"/>
</dbReference>
<dbReference type="InterPro" id="IPR001383">
    <property type="entry name" value="Ribosomal_bL28_bact-type"/>
</dbReference>
<dbReference type="InterPro" id="IPR037147">
    <property type="entry name" value="Ribosomal_bL28_sf"/>
</dbReference>
<dbReference type="NCBIfam" id="TIGR00009">
    <property type="entry name" value="L28"/>
    <property type="match status" value="1"/>
</dbReference>
<dbReference type="PANTHER" id="PTHR13528">
    <property type="entry name" value="39S RIBOSOMAL PROTEIN L28, MITOCHONDRIAL"/>
    <property type="match status" value="1"/>
</dbReference>
<dbReference type="PANTHER" id="PTHR13528:SF2">
    <property type="entry name" value="LARGE RIBOSOMAL SUBUNIT PROTEIN BL28M"/>
    <property type="match status" value="1"/>
</dbReference>
<dbReference type="Pfam" id="PF00830">
    <property type="entry name" value="Ribosomal_L28"/>
    <property type="match status" value="1"/>
</dbReference>
<dbReference type="SUPFAM" id="SSF143800">
    <property type="entry name" value="L28p-like"/>
    <property type="match status" value="1"/>
</dbReference>
<proteinExistence type="inferred from homology"/>
<evidence type="ECO:0000305" key="1"/>